<evidence type="ECO:0000250" key="1">
    <source>
        <dbReference type="UniProtKB" id="Q91ZQ0"/>
    </source>
</evidence>
<evidence type="ECO:0000255" key="2"/>
<evidence type="ECO:0000256" key="3">
    <source>
        <dbReference type="SAM" id="MobiDB-lite"/>
    </source>
</evidence>
<evidence type="ECO:0000269" key="4">
    <source>
    </source>
</evidence>
<evidence type="ECO:0000269" key="5">
    <source>
    </source>
</evidence>
<evidence type="ECO:0000269" key="6">
    <source>
    </source>
</evidence>
<evidence type="ECO:0000269" key="7">
    <source>
    </source>
</evidence>
<evidence type="ECO:0000269" key="8">
    <source>
    </source>
</evidence>
<evidence type="ECO:0000269" key="9">
    <source>
    </source>
</evidence>
<evidence type="ECO:0000269" key="10">
    <source>
    </source>
</evidence>
<evidence type="ECO:0000269" key="11">
    <source>
    </source>
</evidence>
<evidence type="ECO:0000269" key="12">
    <source>
    </source>
</evidence>
<evidence type="ECO:0000303" key="13">
    <source>
    </source>
</evidence>
<evidence type="ECO:0000303" key="14">
    <source>
    </source>
</evidence>
<evidence type="ECO:0000303" key="15">
    <source ref="1"/>
</evidence>
<evidence type="ECO:0000305" key="16"/>
<evidence type="ECO:0000305" key="17">
    <source>
    </source>
</evidence>
<evidence type="ECO:0000312" key="18">
    <source>
        <dbReference type="HGNC" id="HGNC:29559"/>
    </source>
</evidence>
<evidence type="ECO:0007744" key="19">
    <source>
    </source>
</evidence>
<organism>
    <name type="scientific">Homo sapiens</name>
    <name type="common">Human</name>
    <dbReference type="NCBI Taxonomy" id="9606"/>
    <lineage>
        <taxon>Eukaryota</taxon>
        <taxon>Metazoa</taxon>
        <taxon>Chordata</taxon>
        <taxon>Craniata</taxon>
        <taxon>Vertebrata</taxon>
        <taxon>Euteleostomi</taxon>
        <taxon>Mammalia</taxon>
        <taxon>Eutheria</taxon>
        <taxon>Euarchontoglires</taxon>
        <taxon>Primates</taxon>
        <taxon>Haplorrhini</taxon>
        <taxon>Catarrhini</taxon>
        <taxon>Hominidae</taxon>
        <taxon>Homo</taxon>
    </lineage>
</organism>
<reference key="1">
    <citation type="submission" date="1999-12" db="EMBL/GenBank/DDBJ databases">
        <title>Gene Tdc1 is a transmembrane domain containing gene that amplified and overexpressed in human breast cancer.</title>
        <authorList>
            <person name="Wu G."/>
            <person name="Couch F.J."/>
        </authorList>
    </citation>
    <scope>NUCLEOTIDE SEQUENCE [MRNA] (ISOFORM 1)</scope>
</reference>
<reference key="2">
    <citation type="submission" date="2000-08" db="EMBL/GenBank/DDBJ databases">
        <title>A novel lipopolysaccharide-inducible gene (#25).</title>
        <authorList>
            <person name="Yamazaki S."/>
            <person name="Muta T."/>
            <person name="Takeshige K."/>
        </authorList>
    </citation>
    <scope>NUCLEOTIDE SEQUENCE [MRNA] (ISOFORM 1)</scope>
</reference>
<reference key="3">
    <citation type="journal article" date="2001" name="Genome Res.">
        <title>Towards a catalog of human genes and proteins: sequencing and analysis of 500 novel complete protein coding human cDNAs.</title>
        <authorList>
            <person name="Wiemann S."/>
            <person name="Weil B."/>
            <person name="Wellenreuther R."/>
            <person name="Gassenhuber J."/>
            <person name="Glassl S."/>
            <person name="Ansorge W."/>
            <person name="Boecher M."/>
            <person name="Bloecker H."/>
            <person name="Bauersachs S."/>
            <person name="Blum H."/>
            <person name="Lauber J."/>
            <person name="Duesterhoeft A."/>
            <person name="Beyer A."/>
            <person name="Koehrer K."/>
            <person name="Strack N."/>
            <person name="Mewes H.-W."/>
            <person name="Ottenwaelder B."/>
            <person name="Obermaier B."/>
            <person name="Tampe J."/>
            <person name="Heubner D."/>
            <person name="Wambutt R."/>
            <person name="Korn B."/>
            <person name="Klein M."/>
            <person name="Poustka A."/>
        </authorList>
    </citation>
    <scope>NUCLEOTIDE SEQUENCE [LARGE SCALE MRNA] (ISOFORM 1)</scope>
    <source>
        <tissue>Kidney</tissue>
    </source>
</reference>
<reference key="4">
    <citation type="journal article" date="2004" name="Nat. Genet.">
        <title>Complete sequencing and characterization of 21,243 full-length human cDNAs.</title>
        <authorList>
            <person name="Ota T."/>
            <person name="Suzuki Y."/>
            <person name="Nishikawa T."/>
            <person name="Otsuki T."/>
            <person name="Sugiyama T."/>
            <person name="Irie R."/>
            <person name="Wakamatsu A."/>
            <person name="Hayashi K."/>
            <person name="Sato H."/>
            <person name="Nagai K."/>
            <person name="Kimura K."/>
            <person name="Makita H."/>
            <person name="Sekine M."/>
            <person name="Obayashi M."/>
            <person name="Nishi T."/>
            <person name="Shibahara T."/>
            <person name="Tanaka T."/>
            <person name="Ishii S."/>
            <person name="Yamamoto J."/>
            <person name="Saito K."/>
            <person name="Kawai Y."/>
            <person name="Isono Y."/>
            <person name="Nakamura Y."/>
            <person name="Nagahari K."/>
            <person name="Murakami K."/>
            <person name="Yasuda T."/>
            <person name="Iwayanagi T."/>
            <person name="Wagatsuma M."/>
            <person name="Shiratori A."/>
            <person name="Sudo H."/>
            <person name="Hosoiri T."/>
            <person name="Kaku Y."/>
            <person name="Kodaira H."/>
            <person name="Kondo H."/>
            <person name="Sugawara M."/>
            <person name="Takahashi M."/>
            <person name="Kanda K."/>
            <person name="Yokoi T."/>
            <person name="Furuya T."/>
            <person name="Kikkawa E."/>
            <person name="Omura Y."/>
            <person name="Abe K."/>
            <person name="Kamihara K."/>
            <person name="Katsuta N."/>
            <person name="Sato K."/>
            <person name="Tanikawa M."/>
            <person name="Yamazaki M."/>
            <person name="Ninomiya K."/>
            <person name="Ishibashi T."/>
            <person name="Yamashita H."/>
            <person name="Murakawa K."/>
            <person name="Fujimori K."/>
            <person name="Tanai H."/>
            <person name="Kimata M."/>
            <person name="Watanabe M."/>
            <person name="Hiraoka S."/>
            <person name="Chiba Y."/>
            <person name="Ishida S."/>
            <person name="Ono Y."/>
            <person name="Takiguchi S."/>
            <person name="Watanabe S."/>
            <person name="Yosida M."/>
            <person name="Hotuta T."/>
            <person name="Kusano J."/>
            <person name="Kanehori K."/>
            <person name="Takahashi-Fujii A."/>
            <person name="Hara H."/>
            <person name="Tanase T.-O."/>
            <person name="Nomura Y."/>
            <person name="Togiya S."/>
            <person name="Komai F."/>
            <person name="Hara R."/>
            <person name="Takeuchi K."/>
            <person name="Arita M."/>
            <person name="Imose N."/>
            <person name="Musashino K."/>
            <person name="Yuuki H."/>
            <person name="Oshima A."/>
            <person name="Sasaki N."/>
            <person name="Aotsuka S."/>
            <person name="Yoshikawa Y."/>
            <person name="Matsunawa H."/>
            <person name="Ichihara T."/>
            <person name="Shiohata N."/>
            <person name="Sano S."/>
            <person name="Moriya S."/>
            <person name="Momiyama H."/>
            <person name="Satoh N."/>
            <person name="Takami S."/>
            <person name="Terashima Y."/>
            <person name="Suzuki O."/>
            <person name="Nakagawa S."/>
            <person name="Senoh A."/>
            <person name="Mizoguchi H."/>
            <person name="Goto Y."/>
            <person name="Shimizu F."/>
            <person name="Wakebe H."/>
            <person name="Hishigaki H."/>
            <person name="Watanabe T."/>
            <person name="Sugiyama A."/>
            <person name="Takemoto M."/>
            <person name="Kawakami B."/>
            <person name="Yamazaki M."/>
            <person name="Watanabe K."/>
            <person name="Kumagai A."/>
            <person name="Itakura S."/>
            <person name="Fukuzumi Y."/>
            <person name="Fujimori Y."/>
            <person name="Komiyama M."/>
            <person name="Tashiro H."/>
            <person name="Tanigami A."/>
            <person name="Fujiwara T."/>
            <person name="Ono T."/>
            <person name="Yamada K."/>
            <person name="Fujii Y."/>
            <person name="Ozaki K."/>
            <person name="Hirao M."/>
            <person name="Ohmori Y."/>
            <person name="Kawabata A."/>
            <person name="Hikiji T."/>
            <person name="Kobatake N."/>
            <person name="Inagaki H."/>
            <person name="Ikema Y."/>
            <person name="Okamoto S."/>
            <person name="Okitani R."/>
            <person name="Kawakami T."/>
            <person name="Noguchi S."/>
            <person name="Itoh T."/>
            <person name="Shigeta K."/>
            <person name="Senba T."/>
            <person name="Matsumura K."/>
            <person name="Nakajima Y."/>
            <person name="Mizuno T."/>
            <person name="Morinaga M."/>
            <person name="Sasaki M."/>
            <person name="Togashi T."/>
            <person name="Oyama M."/>
            <person name="Hata H."/>
            <person name="Watanabe M."/>
            <person name="Komatsu T."/>
            <person name="Mizushima-Sugano J."/>
            <person name="Satoh T."/>
            <person name="Shirai Y."/>
            <person name="Takahashi Y."/>
            <person name="Nakagawa K."/>
            <person name="Okumura K."/>
            <person name="Nagase T."/>
            <person name="Nomura N."/>
            <person name="Kikuchi H."/>
            <person name="Masuho Y."/>
            <person name="Yamashita R."/>
            <person name="Nakai K."/>
            <person name="Yada T."/>
            <person name="Nakamura Y."/>
            <person name="Ohara O."/>
            <person name="Isogai T."/>
            <person name="Sugano S."/>
        </authorList>
    </citation>
    <scope>NUCLEOTIDE SEQUENCE [LARGE SCALE MRNA] (ISOFORM 2)</scope>
    <source>
        <tissue>Spleen</tissue>
    </source>
</reference>
<reference key="5">
    <citation type="submission" date="2004-06" db="EMBL/GenBank/DDBJ databases">
        <title>Cloning of human full open reading frames in Gateway(TM) system entry vector (pDONR201).</title>
        <authorList>
            <person name="Ebert L."/>
            <person name="Schick M."/>
            <person name="Neubert P."/>
            <person name="Schatten R."/>
            <person name="Henze S."/>
            <person name="Korn B."/>
        </authorList>
    </citation>
    <scope>NUCLEOTIDE SEQUENCE [LARGE SCALE MRNA] (ISOFORM 1)</scope>
</reference>
<reference key="6">
    <citation type="journal article" date="2006" name="Nature">
        <title>DNA sequence of human chromosome 17 and analysis of rearrangement in the human lineage.</title>
        <authorList>
            <person name="Zody M.C."/>
            <person name="Garber M."/>
            <person name="Adams D.J."/>
            <person name="Sharpe T."/>
            <person name="Harrow J."/>
            <person name="Lupski J.R."/>
            <person name="Nicholson C."/>
            <person name="Searle S.M."/>
            <person name="Wilming L."/>
            <person name="Young S.K."/>
            <person name="Abouelleil A."/>
            <person name="Allen N.R."/>
            <person name="Bi W."/>
            <person name="Bloom T."/>
            <person name="Borowsky M.L."/>
            <person name="Bugalter B.E."/>
            <person name="Butler J."/>
            <person name="Chang J.L."/>
            <person name="Chen C.-K."/>
            <person name="Cook A."/>
            <person name="Corum B."/>
            <person name="Cuomo C.A."/>
            <person name="de Jong P.J."/>
            <person name="DeCaprio D."/>
            <person name="Dewar K."/>
            <person name="FitzGerald M."/>
            <person name="Gilbert J."/>
            <person name="Gibson R."/>
            <person name="Gnerre S."/>
            <person name="Goldstein S."/>
            <person name="Grafham D.V."/>
            <person name="Grocock R."/>
            <person name="Hafez N."/>
            <person name="Hagopian D.S."/>
            <person name="Hart E."/>
            <person name="Norman C.H."/>
            <person name="Humphray S."/>
            <person name="Jaffe D.B."/>
            <person name="Jones M."/>
            <person name="Kamal M."/>
            <person name="Khodiyar V.K."/>
            <person name="LaButti K."/>
            <person name="Laird G."/>
            <person name="Lehoczky J."/>
            <person name="Liu X."/>
            <person name="Lokyitsang T."/>
            <person name="Loveland J."/>
            <person name="Lui A."/>
            <person name="Macdonald P."/>
            <person name="Major J.E."/>
            <person name="Matthews L."/>
            <person name="Mauceli E."/>
            <person name="McCarroll S.A."/>
            <person name="Mihalev A.H."/>
            <person name="Mudge J."/>
            <person name="Nguyen C."/>
            <person name="Nicol R."/>
            <person name="O'Leary S.B."/>
            <person name="Osoegawa K."/>
            <person name="Schwartz D.C."/>
            <person name="Shaw-Smith C."/>
            <person name="Stankiewicz P."/>
            <person name="Steward C."/>
            <person name="Swarbreck D."/>
            <person name="Venkataraman V."/>
            <person name="Whittaker C.A."/>
            <person name="Yang X."/>
            <person name="Zimmer A.R."/>
            <person name="Bradley A."/>
            <person name="Hubbard T."/>
            <person name="Birren B.W."/>
            <person name="Rogers J."/>
            <person name="Lander E.S."/>
            <person name="Nusbaum C."/>
        </authorList>
    </citation>
    <scope>NUCLEOTIDE SEQUENCE [LARGE SCALE GENOMIC DNA]</scope>
</reference>
<reference key="7">
    <citation type="journal article" date="2004" name="Genome Res.">
        <title>The status, quality, and expansion of the NIH full-length cDNA project: the Mammalian Gene Collection (MGC).</title>
        <authorList>
            <consortium name="The MGC Project Team"/>
        </authorList>
    </citation>
    <scope>NUCLEOTIDE SEQUENCE [LARGE SCALE MRNA] (ISOFORM 1)</scope>
    <source>
        <tissue>Ovary</tissue>
    </source>
</reference>
<reference key="8">
    <citation type="submission" date="1999-05" db="EMBL/GenBank/DDBJ databases">
        <title>Human partial CDS from CD34+ stem cells.</title>
        <authorList>
            <person name="Ye M."/>
            <person name="Zhang Q.-H."/>
            <person name="Zhou J."/>
            <person name="Shen Y."/>
            <person name="Wu X.-Y."/>
            <person name="Guan Z.Q."/>
            <person name="Wang L."/>
            <person name="Fan H.-Y."/>
            <person name="Mao Y.-F."/>
            <person name="Dai M."/>
            <person name="Huang Q.-H."/>
            <person name="Chen S.-J."/>
            <person name="Chen Z."/>
        </authorList>
    </citation>
    <scope>NUCLEOTIDE SEQUENCE [LARGE SCALE MRNA] OF 243-406 (ISOFORM 1)</scope>
    <source>
        <tissue>Blood</tissue>
    </source>
</reference>
<reference key="9">
    <citation type="journal article" date="2008" name="Oncogene">
        <title>Reduced expression of vacuole membrane protein 1 affects the invasion capacity of tumor cells.</title>
        <authorList>
            <person name="Sauermann M."/>
            <person name="Sahin O."/>
            <person name="Sultmann H."/>
            <person name="Hahne F."/>
            <person name="Blaszkiewicz S."/>
            <person name="Majety M."/>
            <person name="Zatloukal K."/>
            <person name="Fuzesi L."/>
            <person name="Poustka A."/>
            <person name="Wiemann S."/>
            <person name="Arlt D."/>
        </authorList>
    </citation>
    <scope>FUNCTION</scope>
    <scope>INTERACTION WITH TJP1</scope>
    <scope>SUBCELLULAR LOCATION</scope>
</reference>
<reference key="10">
    <citation type="journal article" date="2009" name="Mol. Biol. Cell">
        <title>The TP53INP2 protein is required for autophagy in mammalian cells.</title>
        <authorList>
            <person name="Nowak J."/>
            <person name="Archange C."/>
            <person name="Tardivel-Lacombe J."/>
            <person name="Pontarotti P."/>
            <person name="Pebusque M.J."/>
            <person name="Vaccaro M.I."/>
            <person name="Velasco G."/>
            <person name="Dagorn J.C."/>
            <person name="Iovanna J.L."/>
        </authorList>
    </citation>
    <scope>INTERACTION WITH TP53INP2</scope>
</reference>
<reference key="11">
    <citation type="journal article" date="2012" name="Proc. Natl. Acad. Sci. U.S.A.">
        <title>N-terminal acetylome analyses and functional insights of the N-terminal acetyltransferase NatB.</title>
        <authorList>
            <person name="Van Damme P."/>
            <person name="Lasa M."/>
            <person name="Polevoda B."/>
            <person name="Gazquez C."/>
            <person name="Elosegui-Artola A."/>
            <person name="Kim D.S."/>
            <person name="De Juan-Pardo E."/>
            <person name="Demeyer K."/>
            <person name="Hole K."/>
            <person name="Larrea E."/>
            <person name="Timmerman E."/>
            <person name="Prieto J."/>
            <person name="Arnesen T."/>
            <person name="Sherman F."/>
            <person name="Gevaert K."/>
            <person name="Aldabe R."/>
        </authorList>
    </citation>
    <scope>ACETYLATION [LARGE SCALE ANALYSIS] AT ALA-2</scope>
    <scope>CLEAVAGE OF INITIATOR METHIONINE [LARGE SCALE ANALYSIS]</scope>
    <scope>IDENTIFICATION BY MASS SPECTROMETRY [LARGE SCALE ANALYSIS]</scope>
</reference>
<reference key="12">
    <citation type="journal article" date="2017" name="Mol. Cell">
        <title>The ER-Localized Transmembrane Protein EPG-3/VMP1 Regulates SERCA Activity to Control ER-Isolation Membrane Contacts for Autophagosome Formation.</title>
        <authorList>
            <person name="Zhao Y.G."/>
            <person name="Chen Y."/>
            <person name="Miao G."/>
            <person name="Zhao H."/>
            <person name="Qu W."/>
            <person name="Li D."/>
            <person name="Wang Z."/>
            <person name="Liu N."/>
            <person name="Li L."/>
            <person name="Chen S."/>
            <person name="Liu P."/>
            <person name="Feng D."/>
            <person name="Zhang H."/>
        </authorList>
    </citation>
    <scope>FUNCTION</scope>
    <scope>SUBCELLULAR LOCATION</scope>
    <scope>INTERACTION WITH ATP2A1; PLN; SLN; ATP2A2 AND ATP2A3</scope>
    <scope>MUTAGENESIS OF GLY-197 AND GLY-279</scope>
</reference>
<reference key="13">
    <citation type="journal article" date="2018" name="J. Cell Biol.">
        <title>Genome-wide CRISPR screen identifies TMEM41B as a gene required for autophagosome formation.</title>
        <authorList>
            <person name="Morita K."/>
            <person name="Hama Y."/>
            <person name="Izume T."/>
            <person name="Tamura N."/>
            <person name="Ueno T."/>
            <person name="Yamashita Y."/>
            <person name="Sakamaki Y."/>
            <person name="Mimura K."/>
            <person name="Morishita H."/>
            <person name="Shihoya W."/>
            <person name="Nureki O."/>
            <person name="Mano H."/>
            <person name="Mizushima N."/>
        </authorList>
    </citation>
    <scope>FUNCTION</scope>
    <scope>INTERACTION WITH TMEM41B</scope>
    <scope>REGION VTT DOMAIN</scope>
</reference>
<reference key="14">
    <citation type="journal article" date="2019" name="Elife">
        <title>A critical role of VMP1 in lipoprotein secretion.</title>
        <authorList>
            <person name="Morishita H."/>
            <person name="Zhao Y.G."/>
            <person name="Tamura N."/>
            <person name="Nishimura T."/>
            <person name="Kanda Y."/>
            <person name="Sakamaki Y."/>
            <person name="Okazaki M."/>
            <person name="Li D."/>
            <person name="Mizushima N."/>
        </authorList>
    </citation>
    <scope>FUNCTION</scope>
</reference>
<reference key="15">
    <citation type="journal article" date="2019" name="PLoS Biol.">
        <title>CRISPR screening using an expanded toolkit of autophagy reporters identifies TMEM41B as a novel autophagy factor.</title>
        <authorList>
            <person name="Shoemaker C.J."/>
            <person name="Huang T.Q."/>
            <person name="Weir N.R."/>
            <person name="Polyakov N.J."/>
            <person name="Schultz S.W."/>
            <person name="Denic V."/>
        </authorList>
    </citation>
    <scope>FUNCTION</scope>
</reference>
<reference key="16">
    <citation type="journal article" date="2020" name="Cell">
        <title>TMEM41B Is a Pan-flavivirus Host Factor.</title>
        <authorList>
            <person name="Hoffmann H.H."/>
            <person name="Schneider W.M."/>
            <person name="Rozen-Gagnon K."/>
            <person name="Miles L.A."/>
            <person name="Schuster F."/>
            <person name="Razooky B."/>
            <person name="Jacobson E."/>
            <person name="Wu X."/>
            <person name="Yi S."/>
            <person name="Rudin C.M."/>
            <person name="MacDonald M.R."/>
            <person name="McMullan L.K."/>
            <person name="Poirier J.T."/>
            <person name="Rice C.M."/>
        </authorList>
    </citation>
    <scope>FUNCTION (MICROBIAL INFECTION)</scope>
    <scope>DOMAIN (MICROBIAL INFECTION)</scope>
</reference>
<reference key="17">
    <citation type="journal article" date="2021" name="J. Cell Biol.">
        <title>TMEM41B and VMP1 are scramblases and regulate the distribution of cholesterol and phosphatidylserine.</title>
        <authorList>
            <person name="Li Y.E."/>
            <person name="Wang Y."/>
            <person name="Du X."/>
            <person name="Zhang T."/>
            <person name="Mak H.Y."/>
            <person name="Hancock S.E."/>
            <person name="McEwen H."/>
            <person name="Pandzic E."/>
            <person name="Whan R.M."/>
            <person name="Aw Y.C."/>
            <person name="Lukmantara I.E."/>
            <person name="Yuan Y."/>
            <person name="Dong X."/>
            <person name="Don A."/>
            <person name="Turner N."/>
            <person name="Qi S."/>
            <person name="Yang H."/>
        </authorList>
    </citation>
    <scope>FUNCTION</scope>
    <scope>CATALYTIC ACTIVITY</scope>
</reference>
<reference key="18">
    <citation type="journal article" date="2021" name="Proc. Natl. Acad. Sci. U.S.A.">
        <title>A model for a partnership of lipid transfer proteins and scramblases in membrane expansion and organelle biogenesis.</title>
        <authorList>
            <person name="Ghanbarpour A."/>
            <person name="Valverde D.P."/>
            <person name="Melia T.J."/>
            <person name="Reinisch K.M."/>
        </authorList>
    </citation>
    <scope>FUNCTION</scope>
    <scope>CATALYTIC ACTIVITY</scope>
    <scope>INTERACTION WITH ATG2A</scope>
</reference>
<gene>
    <name evidence="14 18" type="primary">VMP1</name>
    <name evidence="15" type="synonym">TDC1</name>
    <name evidence="18" type="synonym">TMEM49</name>
    <name type="ORF">HSPC292</name>
</gene>
<sequence>MAENGKNCDQRRVAMNKEHHNGNFTDPSSVNEKKRREREERQNIVLWRQPLITLQYFSLEILVILKEWTSKLWHRQSIVVSFLLLLAVLIATYYVEGVHQQYVQRIEKQFLLYAYWIGLGILSSVGLGTGLHTFLLYLGPHIASVTLAAYECNSVNFPEPPYPDQIICPDEEGTEGTISLWSIISKVRIEACMWGIGTAIGELPPYFMARAARLSGAEPDDEEYQEFEEMLEHAESAQDFASRAKLAVQKLVQKVGFFGILACASIPNPLFDLAGITCGHFLVPFWTFFGATLIGKAIIKMHIQKIFVIITFSKHIVEQMVAFIGAVPGIGPSLQKPFQEYLEAQRQKLHHKSEMGTPQGENWLSWMFEKLVVVMVCYFILSIINSMAQSYAKRIQQRLNSEEKTK</sequence>
<comment type="function">
    <text evidence="1 4 6 7 8 9 11 12">Phospholipid scramblase involved in lipid homeostasis and membrane dynamics processes (PubMed:33850023, PubMed:33929485). Has phospholipid scramblase activity toward cholesterol and phosphatidylserine, as well as phosphatidylethanolamine and phosphatidylcholine (PubMed:33850023, PubMed:33929485). Required for autophagosome formation: participates in early stages of autophagosome biogenesis at the endoplasmic reticulum (ER) membrane by reequilibrating the leaflets of the ER as lipids are extracted by ATG2 (ATG2A or ATG2B) to mediate autophagosome assembly (PubMed:28890335, PubMed:30093494, PubMed:30933966, PubMed:33850023, PubMed:33929485). Regulates ATP2A2 activity to control ER-isolation membrane contacts for autophagosome formation (PubMed:28890335). In addition to autophagy, involved in other processes in which phospholipid scramblase activity is required (PubMed:31526472, PubMed:33850023). Modulates ER contacts with lipid droplets, mitochondria and endosomes (PubMed:28890335). Plays an essential role in formation of cell junctions (PubMed:17724469). Upon stress such as bacterial and viral infection, promotes formation of cytoplasmic vacuoles followed by cell death (By similarity). Involved in the cytoplasmic vacuolization of acinar cells during the early stage of acute pancreatitis (By similarity).</text>
</comment>
<comment type="function">
    <text evidence="10">(Microbial infection) Host factor required for infection by all flaviviruses tested such as Zika virus and Yellow fever virus (PubMed:33338421). Probably required post-entry of the virus to facilitate the ER membrane remodeling necessary to form replication organelles (PubMed:33338421).</text>
</comment>
<comment type="catalytic activity">
    <reaction evidence="12">
        <text>a 1,2-diacyl-sn-glycero-3-phospho-L-serine(in) = a 1,2-diacyl-sn-glycero-3-phospho-L-serine(out)</text>
        <dbReference type="Rhea" id="RHEA:38663"/>
        <dbReference type="ChEBI" id="CHEBI:57262"/>
    </reaction>
</comment>
<comment type="catalytic activity">
    <reaction evidence="12">
        <text>cholesterol(in) = cholesterol(out)</text>
        <dbReference type="Rhea" id="RHEA:39747"/>
        <dbReference type="ChEBI" id="CHEBI:16113"/>
    </reaction>
</comment>
<comment type="catalytic activity">
    <reaction evidence="11 12">
        <text>a 1,2-diacyl-sn-glycero-3-phosphocholine(in) = a 1,2-diacyl-sn-glycero-3-phosphocholine(out)</text>
        <dbReference type="Rhea" id="RHEA:38571"/>
        <dbReference type="ChEBI" id="CHEBI:57643"/>
    </reaction>
</comment>
<comment type="catalytic activity">
    <reaction evidence="11 12">
        <text>a 1,2-diacyl-sn-glycero-3-phosphoethanolamine(in) = a 1,2-diacyl-sn-glycero-3-phosphoethanolamine(out)</text>
        <dbReference type="Rhea" id="RHEA:38895"/>
        <dbReference type="ChEBI" id="CHEBI:64612"/>
    </reaction>
</comment>
<comment type="subunit">
    <text evidence="1 4 5 6 7 11">Interacts with BECN1 (By similarity). Interacts with TJP1 (PubMed:17724469). Interacts with TP53INP2 (PubMed:19056683). Interacts with TMEM41B (PubMed:30093494). Interacts with ATP2A2, PLN and SLN; competes with PLN and SLN to prevent them from forming an inhibitory complex with ATP2A2 (PubMed:28890335). Interacts with ATG2A (PubMed:33850023).</text>
</comment>
<comment type="interaction">
    <interactant intactId="EBI-2800296">
        <id>Q96GC9</id>
    </interactant>
    <interactant intactId="EBI-949378">
        <id>Q14457</id>
        <label>BECN1</label>
    </interactant>
    <organismsDiffer>false</organismsDiffer>
    <experiments>3</experiments>
</comment>
<comment type="interaction">
    <interactant intactId="EBI-2800296">
        <id>Q96GC9</id>
    </interactant>
    <interactant intactId="EBI-1046040">
        <id>P00387</id>
        <label>CYB5R3</label>
    </interactant>
    <organismsDiffer>false</organismsDiffer>
    <experiments>3</experiments>
</comment>
<comment type="interaction">
    <interactant intactId="EBI-2800296">
        <id>Q96GC9</id>
    </interactant>
    <interactant intactId="EBI-781551">
        <id>Q9Y282</id>
        <label>ERGIC3</label>
    </interactant>
    <organismsDiffer>false</organismsDiffer>
    <experiments>4</experiments>
</comment>
<comment type="interaction">
    <interactant intactId="EBI-2800296">
        <id>Q96GC9</id>
    </interactant>
    <interactant intactId="EBI-18304435">
        <id>Q5JX71</id>
        <label>FAM209A</label>
    </interactant>
    <organismsDiffer>false</organismsDiffer>
    <experiments>3</experiments>
</comment>
<comment type="interaction">
    <interactant intactId="EBI-2800296">
        <id>Q96GC9</id>
    </interactant>
    <interactant intactId="EBI-16439278">
        <id>Q6FHY5</id>
        <label>MEOX2</label>
    </interactant>
    <organismsDiffer>false</organismsDiffer>
    <experiments>3</experiments>
</comment>
<comment type="interaction">
    <interactant intactId="EBI-2800296">
        <id>Q96GC9</id>
    </interactant>
    <interactant intactId="EBI-2823239">
        <id>Q9NUM3</id>
        <label>SLC39A9</label>
    </interactant>
    <organismsDiffer>false</organismsDiffer>
    <experiments>3</experiments>
</comment>
<comment type="subcellular location">
    <subcellularLocation>
        <location evidence="1">Endoplasmic reticulum-Golgi intermediate compartment membrane</location>
        <topology evidence="2">Multi-pass membrane protein</topology>
    </subcellularLocation>
    <subcellularLocation>
        <location evidence="4">Cell membrane</location>
        <topology evidence="2">Multi-pass membrane protein</topology>
    </subcellularLocation>
    <subcellularLocation>
        <location evidence="1">Vacuole membrane</location>
        <topology evidence="2">Multi-pass membrane protein</topology>
    </subcellularLocation>
    <subcellularLocation>
        <location evidence="4 6">Endoplasmic reticulum membrane</location>
        <topology evidence="2">Multi-pass membrane protein</topology>
    </subcellularLocation>
</comment>
<comment type="alternative products">
    <event type="alternative splicing"/>
    <isoform>
        <id>Q96GC9-1</id>
        <name>1</name>
        <sequence type="displayed"/>
    </isoform>
    <isoform>
        <id>Q96GC9-2</id>
        <name>2</name>
        <sequence type="described" ref="VSP_056106"/>
    </isoform>
</comment>
<comment type="domain">
    <text evidence="17">The VTT domain was previously called the SNARE-assoc domain. As there is no evidence that this domain associates with SNARE proteins, it was renamed as VMP1, TMEM41, and TVP38 (VTT) domain.</text>
</comment>
<comment type="domain">
    <text evidence="10">(Microbial infection) VTT domain is required for flavivirus infection.</text>
</comment>
<comment type="similarity">
    <text evidence="16">Belongs to the VMP1 family.</text>
</comment>
<comment type="online information" name="Atlas of Genetics and Cytogenetics in Oncology and Haematology">
    <link uri="https://atlasgeneticsoncology.org/gene/50079/VMP1"/>
</comment>
<proteinExistence type="evidence at protein level"/>
<accession>Q96GC9</accession>
<accession>B4DVV9</accession>
<accession>Q9H0P4</accession>
<accession>Q9P089</accession>
<name>VMP1_HUMAN</name>
<keyword id="KW-0007">Acetylation</keyword>
<keyword id="KW-0025">Alternative splicing</keyword>
<keyword id="KW-0072">Autophagy</keyword>
<keyword id="KW-0130">Cell adhesion</keyword>
<keyword id="KW-1003">Cell membrane</keyword>
<keyword id="KW-0256">Endoplasmic reticulum</keyword>
<keyword id="KW-0445">Lipid transport</keyword>
<keyword id="KW-0472">Membrane</keyword>
<keyword id="KW-1267">Proteomics identification</keyword>
<keyword id="KW-1185">Reference proteome</keyword>
<keyword id="KW-0812">Transmembrane</keyword>
<keyword id="KW-1133">Transmembrane helix</keyword>
<keyword id="KW-0813">Transport</keyword>
<keyword id="KW-0926">Vacuole</keyword>
<dbReference type="EMBL" id="AF214006">
    <property type="protein sequence ID" value="AAL36461.1"/>
    <property type="molecule type" value="mRNA"/>
</dbReference>
<dbReference type="EMBL" id="AB047551">
    <property type="protein sequence ID" value="BAF47368.1"/>
    <property type="molecule type" value="mRNA"/>
</dbReference>
<dbReference type="EMBL" id="AL136711">
    <property type="protein sequence ID" value="CAB66646.1"/>
    <property type="molecule type" value="mRNA"/>
</dbReference>
<dbReference type="EMBL" id="AK301254">
    <property type="protein sequence ID" value="BAG62821.1"/>
    <property type="molecule type" value="mRNA"/>
</dbReference>
<dbReference type="EMBL" id="CR533521">
    <property type="protein sequence ID" value="CAG38552.1"/>
    <property type="molecule type" value="mRNA"/>
</dbReference>
<dbReference type="EMBL" id="AC004686">
    <property type="status" value="NOT_ANNOTATED_CDS"/>
    <property type="molecule type" value="Genomic_DNA"/>
</dbReference>
<dbReference type="EMBL" id="AC025858">
    <property type="status" value="NOT_ANNOTATED_CDS"/>
    <property type="molecule type" value="Genomic_DNA"/>
</dbReference>
<dbReference type="EMBL" id="AC040904">
    <property type="status" value="NOT_ANNOTATED_CDS"/>
    <property type="molecule type" value="Genomic_DNA"/>
</dbReference>
<dbReference type="EMBL" id="AC091271">
    <property type="status" value="NOT_ANNOTATED_CDS"/>
    <property type="molecule type" value="Genomic_DNA"/>
</dbReference>
<dbReference type="EMBL" id="BC009758">
    <property type="protein sequence ID" value="AAH09758.1"/>
    <property type="molecule type" value="mRNA"/>
</dbReference>
<dbReference type="EMBL" id="AF161410">
    <property type="protein sequence ID" value="AAF28970.1"/>
    <property type="molecule type" value="mRNA"/>
</dbReference>
<dbReference type="CCDS" id="CCDS11619.1">
    <molecule id="Q96GC9-1"/>
</dbReference>
<dbReference type="RefSeq" id="NP_001316323.1">
    <molecule id="Q96GC9-1"/>
    <property type="nucleotide sequence ID" value="NM_001329394.2"/>
</dbReference>
<dbReference type="RefSeq" id="NP_001316326.1">
    <property type="nucleotide sequence ID" value="NM_001329397.1"/>
</dbReference>
<dbReference type="RefSeq" id="NP_001316331.1">
    <molecule id="Q96GC9-2"/>
    <property type="nucleotide sequence ID" value="NM_001329402.2"/>
</dbReference>
<dbReference type="RefSeq" id="NP_112200.2">
    <molecule id="Q96GC9-1"/>
    <property type="nucleotide sequence ID" value="NM_030938.4"/>
</dbReference>
<dbReference type="SMR" id="Q96GC9"/>
<dbReference type="BioGRID" id="123567">
    <property type="interactions" value="206"/>
</dbReference>
<dbReference type="FunCoup" id="Q96GC9">
    <property type="interactions" value="2143"/>
</dbReference>
<dbReference type="IntAct" id="Q96GC9">
    <property type="interactions" value="140"/>
</dbReference>
<dbReference type="MINT" id="Q96GC9"/>
<dbReference type="STRING" id="9606.ENSP00000262291"/>
<dbReference type="TCDB" id="8.A.97.1.1">
    <property type="family name" value="the epg-3/vmp1 (epg/vpm) scramblase family"/>
</dbReference>
<dbReference type="GlyGen" id="Q96GC9">
    <property type="glycosylation" value="2 sites, 1 N-linked glycan (1 site), 1 O-linked glycan (1 site)"/>
</dbReference>
<dbReference type="iPTMnet" id="Q96GC9"/>
<dbReference type="PhosphoSitePlus" id="Q96GC9"/>
<dbReference type="SwissPalm" id="Q96GC9"/>
<dbReference type="BioMuta" id="VMP1"/>
<dbReference type="DMDM" id="74731809"/>
<dbReference type="jPOST" id="Q96GC9"/>
<dbReference type="MassIVE" id="Q96GC9"/>
<dbReference type="PaxDb" id="9606-ENSP00000262291"/>
<dbReference type="PeptideAtlas" id="Q96GC9"/>
<dbReference type="ProteomicsDB" id="5298"/>
<dbReference type="ProteomicsDB" id="76615">
    <molecule id="Q96GC9-1"/>
</dbReference>
<dbReference type="Pumba" id="Q96GC9"/>
<dbReference type="TopDownProteomics" id="Q96GC9-1">
    <molecule id="Q96GC9-1"/>
</dbReference>
<dbReference type="Antibodypedia" id="31116">
    <property type="antibodies" value="255 antibodies from 27 providers"/>
</dbReference>
<dbReference type="DNASU" id="81671"/>
<dbReference type="Ensembl" id="ENST00000262291.9">
    <molecule id="Q96GC9-1"/>
    <property type="protein sequence ID" value="ENSP00000262291.3"/>
    <property type="gene ID" value="ENSG00000062716.13"/>
</dbReference>
<dbReference type="Ensembl" id="ENST00000587259.6">
    <molecule id="Q96GC9-1"/>
    <property type="protein sequence ID" value="ENSP00000465397.2"/>
    <property type="gene ID" value="ENSG00000062716.13"/>
</dbReference>
<dbReference type="Ensembl" id="ENST00000591315.6">
    <molecule id="Q96GC9-1"/>
    <property type="protein sequence ID" value="ENSP00000466511.2"/>
    <property type="gene ID" value="ENSG00000062716.13"/>
</dbReference>
<dbReference type="GeneID" id="81671"/>
<dbReference type="KEGG" id="hsa:81671"/>
<dbReference type="MANE-Select" id="ENST00000262291.9">
    <property type="protein sequence ID" value="ENSP00000262291.3"/>
    <property type="RefSeq nucleotide sequence ID" value="NM_030938.5"/>
    <property type="RefSeq protein sequence ID" value="NP_112200.2"/>
</dbReference>
<dbReference type="UCSC" id="uc002ixu.5">
    <molecule id="Q96GC9-1"/>
    <property type="organism name" value="human"/>
</dbReference>
<dbReference type="AGR" id="HGNC:29559"/>
<dbReference type="CTD" id="81671"/>
<dbReference type="DisGeNET" id="81671"/>
<dbReference type="GeneCards" id="VMP1"/>
<dbReference type="HGNC" id="HGNC:29559">
    <property type="gene designation" value="VMP1"/>
</dbReference>
<dbReference type="HPA" id="ENSG00000062716">
    <property type="expression patterns" value="Low tissue specificity"/>
</dbReference>
<dbReference type="MIM" id="611753">
    <property type="type" value="gene"/>
</dbReference>
<dbReference type="neXtProt" id="NX_Q96GC9"/>
<dbReference type="OpenTargets" id="ENSG00000062716"/>
<dbReference type="PharmGKB" id="PA142670765"/>
<dbReference type="VEuPathDB" id="HostDB:ENSG00000062716"/>
<dbReference type="eggNOG" id="KOG1109">
    <property type="taxonomic scope" value="Eukaryota"/>
</dbReference>
<dbReference type="GeneTree" id="ENSGT00390000007230"/>
<dbReference type="HOGENOM" id="CLU_033298_0_1_1"/>
<dbReference type="InParanoid" id="Q96GC9"/>
<dbReference type="OMA" id="EEPYDKR"/>
<dbReference type="OrthoDB" id="2016540at2759"/>
<dbReference type="PAN-GO" id="Q96GC9">
    <property type="GO annotations" value="5 GO annotations based on evolutionary models"/>
</dbReference>
<dbReference type="PhylomeDB" id="Q96GC9"/>
<dbReference type="TreeFam" id="TF313699"/>
<dbReference type="PathwayCommons" id="Q96GC9"/>
<dbReference type="SignaLink" id="Q96GC9"/>
<dbReference type="BioGRID-ORCS" id="81671">
    <property type="hits" value="673 hits in 1168 CRISPR screens"/>
</dbReference>
<dbReference type="ChiTaRS" id="VMP1">
    <property type="organism name" value="human"/>
</dbReference>
<dbReference type="GeneWiki" id="TMEM49"/>
<dbReference type="GenomeRNAi" id="81671"/>
<dbReference type="Pharos" id="Q96GC9">
    <property type="development level" value="Tbio"/>
</dbReference>
<dbReference type="PRO" id="PR:Q96GC9"/>
<dbReference type="Proteomes" id="UP000005640">
    <property type="component" value="Chromosome 17"/>
</dbReference>
<dbReference type="RNAct" id="Q96GC9">
    <property type="molecule type" value="protein"/>
</dbReference>
<dbReference type="Bgee" id="ENSG00000062716">
    <property type="expression patterns" value="Expressed in blood and 198 other cell types or tissues"/>
</dbReference>
<dbReference type="ExpressionAtlas" id="Q96GC9">
    <property type="expression patterns" value="baseline and differential"/>
</dbReference>
<dbReference type="GO" id="GO:0000421">
    <property type="term" value="C:autophagosome membrane"/>
    <property type="evidence" value="ECO:0000250"/>
    <property type="project" value="UniProtKB"/>
</dbReference>
<dbReference type="GO" id="GO:0012505">
    <property type="term" value="C:endomembrane system"/>
    <property type="evidence" value="ECO:0000318"/>
    <property type="project" value="GO_Central"/>
</dbReference>
<dbReference type="GO" id="GO:0005783">
    <property type="term" value="C:endoplasmic reticulum"/>
    <property type="evidence" value="ECO:0000314"/>
    <property type="project" value="HPA"/>
</dbReference>
<dbReference type="GO" id="GO:0005789">
    <property type="term" value="C:endoplasmic reticulum membrane"/>
    <property type="evidence" value="ECO:0000314"/>
    <property type="project" value="UniProtKB"/>
</dbReference>
<dbReference type="GO" id="GO:0033116">
    <property type="term" value="C:endoplasmic reticulum-Golgi intermediate compartment membrane"/>
    <property type="evidence" value="ECO:0007669"/>
    <property type="project" value="UniProtKB-SubCell"/>
</dbReference>
<dbReference type="GO" id="GO:0016020">
    <property type="term" value="C:membrane"/>
    <property type="evidence" value="ECO:0000318"/>
    <property type="project" value="GO_Central"/>
</dbReference>
<dbReference type="GO" id="GO:0005730">
    <property type="term" value="C:nucleolus"/>
    <property type="evidence" value="ECO:0000314"/>
    <property type="project" value="HPA"/>
</dbReference>
<dbReference type="GO" id="GO:0000407">
    <property type="term" value="C:phagophore assembly site"/>
    <property type="evidence" value="ECO:0007669"/>
    <property type="project" value="Ensembl"/>
</dbReference>
<dbReference type="GO" id="GO:0005886">
    <property type="term" value="C:plasma membrane"/>
    <property type="evidence" value="ECO:0007669"/>
    <property type="project" value="UniProtKB-SubCell"/>
</dbReference>
<dbReference type="GO" id="GO:0017128">
    <property type="term" value="F:phospholipid scramblase activity"/>
    <property type="evidence" value="ECO:0000314"/>
    <property type="project" value="UniProtKB"/>
</dbReference>
<dbReference type="GO" id="GO:0000045">
    <property type="term" value="P:autophagosome assembly"/>
    <property type="evidence" value="ECO:0000314"/>
    <property type="project" value="UniProtKB"/>
</dbReference>
<dbReference type="GO" id="GO:0016240">
    <property type="term" value="P:autophagosome membrane docking"/>
    <property type="evidence" value="ECO:0000314"/>
    <property type="project" value="UniProtKB"/>
</dbReference>
<dbReference type="GO" id="GO:0006914">
    <property type="term" value="P:autophagy"/>
    <property type="evidence" value="ECO:0000314"/>
    <property type="project" value="UniProtKB"/>
</dbReference>
<dbReference type="GO" id="GO:0034329">
    <property type="term" value="P:cell junction assembly"/>
    <property type="evidence" value="ECO:0000315"/>
    <property type="project" value="UniProtKB"/>
</dbReference>
<dbReference type="GO" id="GO:0098609">
    <property type="term" value="P:cell-cell adhesion"/>
    <property type="evidence" value="ECO:0000315"/>
    <property type="project" value="UniProtKB"/>
</dbReference>
<dbReference type="GO" id="GO:0007566">
    <property type="term" value="P:embryo implantation"/>
    <property type="evidence" value="ECO:0007669"/>
    <property type="project" value="Ensembl"/>
</dbReference>
<dbReference type="GO" id="GO:0007030">
    <property type="term" value="P:Golgi organization"/>
    <property type="evidence" value="ECO:0000318"/>
    <property type="project" value="GO_Central"/>
</dbReference>
<dbReference type="GO" id="GO:0042953">
    <property type="term" value="P:lipoprotein transport"/>
    <property type="evidence" value="ECO:0000315"/>
    <property type="project" value="UniProtKB"/>
</dbReference>
<dbReference type="GO" id="GO:1990456">
    <property type="term" value="P:mitochondrion-endoplasmic reticulum membrane tethering"/>
    <property type="evidence" value="ECO:0000314"/>
    <property type="project" value="UniProtKB"/>
</dbReference>
<dbReference type="GO" id="GO:0140056">
    <property type="term" value="P:organelle localization by membrane tethering"/>
    <property type="evidence" value="ECO:0000314"/>
    <property type="project" value="UniProtKB"/>
</dbReference>
<dbReference type="GO" id="GO:1901896">
    <property type="term" value="P:positive regulation of ATPase-coupled calcium transmembrane transporter activity"/>
    <property type="evidence" value="ECO:0000314"/>
    <property type="project" value="UniProtKB"/>
</dbReference>
<protein>
    <recommendedName>
        <fullName evidence="16">Vacuole membrane protein 1</fullName>
    </recommendedName>
    <alternativeName>
        <fullName>Transmembrane protein 49</fullName>
    </alternativeName>
</protein>
<feature type="initiator methionine" description="Removed" evidence="19">
    <location>
        <position position="1"/>
    </location>
</feature>
<feature type="chain" id="PRO_0000284546" description="Vacuole membrane protein 1">
    <location>
        <begin position="2"/>
        <end position="406"/>
    </location>
</feature>
<feature type="topological domain" description="Cytoplasmic" evidence="2">
    <location>
        <begin position="2"/>
        <end position="43"/>
    </location>
</feature>
<feature type="transmembrane region" description="Helical" evidence="2">
    <location>
        <begin position="44"/>
        <end position="64"/>
    </location>
</feature>
<feature type="topological domain" description="Extracellular" evidence="2">
    <location>
        <begin position="65"/>
        <end position="77"/>
    </location>
</feature>
<feature type="transmembrane region" description="Helical" evidence="2">
    <location>
        <begin position="78"/>
        <end position="98"/>
    </location>
</feature>
<feature type="topological domain" description="Cytoplasmic" evidence="2">
    <location>
        <begin position="99"/>
        <end position="109"/>
    </location>
</feature>
<feature type="transmembrane region" description="Helical" evidence="2">
    <location>
        <begin position="110"/>
        <end position="130"/>
    </location>
</feature>
<feature type="topological domain" description="Extracellular" evidence="2">
    <location>
        <begin position="131"/>
        <end position="250"/>
    </location>
</feature>
<feature type="transmembrane region" description="Helical" evidence="2">
    <location>
        <begin position="251"/>
        <end position="271"/>
    </location>
</feature>
<feature type="topological domain" description="Cytoplasmic" evidence="2">
    <location>
        <begin position="272"/>
        <end position="273"/>
    </location>
</feature>
<feature type="transmembrane region" description="Helical" evidence="2">
    <location>
        <begin position="274"/>
        <end position="294"/>
    </location>
</feature>
<feature type="topological domain" description="Extracellular" evidence="2">
    <location>
        <begin position="295"/>
        <end position="305"/>
    </location>
</feature>
<feature type="transmembrane region" description="Helical" evidence="2">
    <location>
        <begin position="306"/>
        <end position="326"/>
    </location>
</feature>
<feature type="topological domain" description="Cytoplasmic" evidence="2">
    <location>
        <begin position="327"/>
        <end position="363"/>
    </location>
</feature>
<feature type="transmembrane region" description="Helical" evidence="2">
    <location>
        <begin position="364"/>
        <end position="384"/>
    </location>
</feature>
<feature type="topological domain" description="Extracellular" evidence="2">
    <location>
        <begin position="385"/>
        <end position="406"/>
    </location>
</feature>
<feature type="region of interest" description="Disordered" evidence="3">
    <location>
        <begin position="1"/>
        <end position="35"/>
    </location>
</feature>
<feature type="region of interest" description="VTT domain" evidence="17">
    <location>
        <begin position="173"/>
        <end position="316"/>
    </location>
</feature>
<feature type="compositionally biased region" description="Basic and acidic residues" evidence="3">
    <location>
        <begin position="1"/>
        <end position="21"/>
    </location>
</feature>
<feature type="modified residue" description="N-acetylalanine" evidence="19">
    <location>
        <position position="2"/>
    </location>
</feature>
<feature type="splice variant" id="VSP_056106" description="In isoform 2." evidence="13">
    <location>
        <begin position="1"/>
        <end position="192"/>
    </location>
</feature>
<feature type="mutagenesis site" description="Decreases interaction with ATP2A2." evidence="6">
    <original>G</original>
    <variation>R</variation>
    <location>
        <position position="197"/>
    </location>
</feature>
<feature type="mutagenesis site" description="Decreases interaction with ATP2A2." evidence="6">
    <original>G</original>
    <variation>E</variation>
    <location>
        <position position="279"/>
    </location>
</feature>
<feature type="sequence conflict" description="In Ref. 3; CAB66646 and 5; CAG38552." evidence="16" ref="3 5">
    <original>S</original>
    <variation>F</variation>
    <location>
        <position position="179"/>
    </location>
</feature>